<evidence type="ECO:0000250" key="1"/>
<evidence type="ECO:0000255" key="2"/>
<evidence type="ECO:0000305" key="3"/>
<comment type="function">
    <text evidence="1">Class I viral fusion protein. Under the current model, the protein has at least 3 conformational states: pre-fusion native state, pre-hairpin intermediate state, and post-fusion hairpin state. During viral and plasma cell membrane fusion, the heptad repeat (HR) regions assume a trimer-of-hairpins structure, positioning the fusion peptide in close proximity to the C-terminal region of the ectodomain. The formation of this structure appears to drive apposition and subsequent fusion of viral and plasma cell membranes. Directs fusion of viral and cellular membranes leading to delivery of the nucleocapsid into the cytoplasm. This fusion is pH independent and occurs directly at the outer cell membrane. The trimer of F1-F2 (F protein) probably interacts with HN at the virion surface. Upon HN binding to its cellular receptor, the hydrophobic fusion peptide is unmasked and interacts with the cellular membrane, inducing the fusion between cell and virion membranes. Later in infection, F proteins expressed at the plasma membrane of infected cells could mediate fusion with adjacent cells to form syncytia, a cytopathic effect that could lead to tissue necrosis (By similarity).</text>
</comment>
<comment type="subunit">
    <text evidence="1">Homotrimer of disulfide-linked F1-F2.</text>
</comment>
<comment type="subcellular location">
    <subcellularLocation>
        <location evidence="1">Virion membrane</location>
        <topology evidence="1">Single-pass type I membrane protein</topology>
    </subcellularLocation>
    <subcellularLocation>
        <location evidence="1">Host cell membrane</location>
        <topology evidence="1">Single-pass membrane protein</topology>
    </subcellularLocation>
</comment>
<comment type="PTM">
    <text evidence="1">The inactive precursor F0 is glycosylated and proteolytically cleaved into F1 and F2 to be functionally active. The cleavage is mediated by cellular proteases during the transport and maturation of the polypeptide (By similarity).</text>
</comment>
<comment type="similarity">
    <text evidence="3">Belongs to the paramyxoviruses fusion glycoprotein family.</text>
</comment>
<sequence length="553" mass="58866">MGSRSSTRIPVPLMLTVRVMLALSCVCPTSALDGRPLAAAGIVVTGDKAVNIYTSSQTGSIIIKLLPNMPKDKEACAKAPLEAYNRTLTTLLTPLGDSIRRIQESVTTSGGGKQGRLIGAIIGGVALGVATAAQITAASALIQANQNAANILLLKESIAATNEAVHEVTNGLSQLAVAVGKMQQFVNDQFNKTAQELDCIKITQQVGVELNLYLTELTTVFGPQITSPALTQLTIQALYNLAGGNMDYLLTKLGVGNNQLSSLISSGLITGNPILYDSQTQLLGIQVTLPSVGNLNNMRATYLETLSVSTTKGFASALVPKVVTQVGSVIEELDTSYCIETDLDLFFSRIVTFPMSPGIYSCLSGNTSACMYSKTEGALTTPYMTLKGSVIANCKMTTCRCADPPGIISQNYGEAVSLIDRQSCNMFSLDGITLRLSGEFDATYQKNISIQDSQVIVTGNLDISTELGNVNNSISNALDKLEESNSKLDKVNVKLTSTSALITYIVLTVISLVCGILSLVLACYLMYKQKAQQKTLLWLGNNTLDQMRATTKM</sequence>
<gene>
    <name type="primary">F</name>
</gene>
<reference key="1">
    <citation type="journal article" date="1989" name="Virology">
        <title>Newcastle disease virus evolution. II. Lack of gene recombination in generating virulent and avirulent strains.</title>
        <authorList>
            <person name="Toyoda T."/>
            <person name="Sakaguchi T."/>
            <person name="Hirota H."/>
            <person name="Gotoh B."/>
            <person name="Kuma K."/>
            <person name="Miyata T."/>
            <person name="Nagai Y."/>
        </authorList>
    </citation>
    <scope>NUCLEOTIDE SEQUENCE [GENOMIC RNA]</scope>
</reference>
<name>FUS_NDVQ</name>
<organism>
    <name type="scientific">Newcastle disease virus (strain Queensland/66)</name>
    <name type="common">NDV</name>
    <dbReference type="NCBI Taxonomy" id="11186"/>
    <lineage>
        <taxon>Viruses</taxon>
        <taxon>Riboviria</taxon>
        <taxon>Orthornavirae</taxon>
        <taxon>Negarnaviricota</taxon>
        <taxon>Haploviricotina</taxon>
        <taxon>Monjiviricetes</taxon>
        <taxon>Mononegavirales</taxon>
        <taxon>Paramyxoviridae</taxon>
        <taxon>Avulavirinae</taxon>
        <taxon>Orthoavulavirus</taxon>
        <taxon>Orthoavulavirus javaense</taxon>
        <taxon>Avian paramyxovirus 1</taxon>
    </lineage>
</organism>
<keyword id="KW-0175">Coiled coil</keyword>
<keyword id="KW-1015">Disulfide bond</keyword>
<keyword id="KW-1169">Fusion of virus membrane with host cell membrane</keyword>
<keyword id="KW-1168">Fusion of virus membrane with host membrane</keyword>
<keyword id="KW-0325">Glycoprotein</keyword>
<keyword id="KW-1032">Host cell membrane</keyword>
<keyword id="KW-1043">Host membrane</keyword>
<keyword id="KW-0449">Lipoprotein</keyword>
<keyword id="KW-0472">Membrane</keyword>
<keyword id="KW-0564">Palmitate</keyword>
<keyword id="KW-0732">Signal</keyword>
<keyword id="KW-0812">Transmembrane</keyword>
<keyword id="KW-1133">Transmembrane helix</keyword>
<keyword id="KW-0261">Viral envelope protein</keyword>
<keyword id="KW-1162">Viral penetration into host cytoplasm</keyword>
<keyword id="KW-0946">Virion</keyword>
<keyword id="KW-1160">Virus entry into host cell</keyword>
<proteinExistence type="inferred from homology"/>
<dbReference type="EMBL" id="M24693">
    <property type="protein sequence ID" value="AAA46644.1"/>
    <property type="molecule type" value="Genomic_RNA"/>
</dbReference>
<dbReference type="PIR" id="B46329">
    <property type="entry name" value="B46329"/>
</dbReference>
<dbReference type="SMR" id="P33615"/>
<dbReference type="GlyCosmos" id="P33615">
    <property type="glycosylation" value="5 sites, No reported glycans"/>
</dbReference>
<dbReference type="GO" id="GO:0020002">
    <property type="term" value="C:host cell plasma membrane"/>
    <property type="evidence" value="ECO:0007669"/>
    <property type="project" value="UniProtKB-SubCell"/>
</dbReference>
<dbReference type="GO" id="GO:0016020">
    <property type="term" value="C:membrane"/>
    <property type="evidence" value="ECO:0007669"/>
    <property type="project" value="UniProtKB-KW"/>
</dbReference>
<dbReference type="GO" id="GO:0019031">
    <property type="term" value="C:viral envelope"/>
    <property type="evidence" value="ECO:0007669"/>
    <property type="project" value="UniProtKB-KW"/>
</dbReference>
<dbReference type="GO" id="GO:0055036">
    <property type="term" value="C:virion membrane"/>
    <property type="evidence" value="ECO:0007669"/>
    <property type="project" value="UniProtKB-SubCell"/>
</dbReference>
<dbReference type="GO" id="GO:0019064">
    <property type="term" value="P:fusion of virus membrane with host plasma membrane"/>
    <property type="evidence" value="ECO:0007669"/>
    <property type="project" value="UniProtKB-KW"/>
</dbReference>
<dbReference type="GO" id="GO:0046718">
    <property type="term" value="P:symbiont entry into host cell"/>
    <property type="evidence" value="ECO:0007669"/>
    <property type="project" value="UniProtKB-KW"/>
</dbReference>
<dbReference type="Gene3D" id="1.10.287.2480">
    <property type="match status" value="1"/>
</dbReference>
<dbReference type="Gene3D" id="6.10.10.110">
    <property type="match status" value="1"/>
</dbReference>
<dbReference type="Gene3D" id="2.60.40.1690">
    <property type="entry name" value="Head and neck region of the ectodomain of NDV fusion glycoprotein"/>
    <property type="match status" value="1"/>
</dbReference>
<dbReference type="Gene3D" id="2.40.490.10">
    <property type="entry name" value="Newcastle disease virus like domain"/>
    <property type="match status" value="1"/>
</dbReference>
<dbReference type="InterPro" id="IPR000776">
    <property type="entry name" value="Fusion_F0_Paramyxovir"/>
</dbReference>
<dbReference type="Pfam" id="PF00523">
    <property type="entry name" value="Fusion_gly"/>
    <property type="match status" value="1"/>
</dbReference>
<dbReference type="SUPFAM" id="SSF69922">
    <property type="entry name" value="Head and neck region of the ectodomain of NDV fusion glycoprotein"/>
    <property type="match status" value="1"/>
</dbReference>
<dbReference type="SUPFAM" id="SSF58069">
    <property type="entry name" value="Virus ectodomain"/>
    <property type="match status" value="1"/>
</dbReference>
<protein>
    <recommendedName>
        <fullName>Fusion glycoprotein F0</fullName>
    </recommendedName>
    <component>
        <recommendedName>
            <fullName>Fusion glycoprotein F2</fullName>
        </recommendedName>
    </component>
    <component>
        <recommendedName>
            <fullName>Fusion glycoprotein F1</fullName>
        </recommendedName>
    </component>
</protein>
<organismHost>
    <name type="scientific">Gallus gallus</name>
    <name type="common">Chicken</name>
    <dbReference type="NCBI Taxonomy" id="9031"/>
</organismHost>
<accession>P33615</accession>
<feature type="signal peptide" evidence="2">
    <location>
        <begin position="1"/>
        <end position="31"/>
    </location>
</feature>
<feature type="chain" id="PRO_0000039315" description="Fusion glycoprotein F0">
    <location>
        <begin position="32"/>
        <end position="553"/>
    </location>
</feature>
<feature type="chain" id="PRO_0000039316" description="Fusion glycoprotein F2">
    <location>
        <begin position="32"/>
        <end position="116"/>
    </location>
</feature>
<feature type="chain" id="PRO_0000039317" description="Fusion glycoprotein F1">
    <location>
        <begin position="117"/>
        <end position="553"/>
    </location>
</feature>
<feature type="topological domain" description="Extracellular" evidence="1">
    <location>
        <begin position="32"/>
        <end position="500"/>
    </location>
</feature>
<feature type="transmembrane region" description="Helical" evidence="1">
    <location>
        <begin position="501"/>
        <end position="521"/>
    </location>
</feature>
<feature type="topological domain" description="Cytoplasmic" evidence="1">
    <location>
        <begin position="522"/>
        <end position="553"/>
    </location>
</feature>
<feature type="region of interest" description="Fusion peptide" evidence="1">
    <location>
        <begin position="117"/>
        <end position="141"/>
    </location>
</feature>
<feature type="coiled-coil region" evidence="2">
    <location>
        <begin position="142"/>
        <end position="170"/>
    </location>
</feature>
<feature type="coiled-coil region" evidence="2">
    <location>
        <begin position="466"/>
        <end position="491"/>
    </location>
</feature>
<feature type="site" description="Cleavage; by host" evidence="1">
    <location>
        <begin position="116"/>
        <end position="117"/>
    </location>
</feature>
<feature type="lipid moiety-binding region" description="S-palmitoyl cysteine; by host" evidence="2">
    <location>
        <position position="523"/>
    </location>
</feature>
<feature type="glycosylation site" description="N-linked (GlcNAc...) asparagine; by host" evidence="2">
    <location>
        <position position="85"/>
    </location>
</feature>
<feature type="glycosylation site" description="N-linked (GlcNAc...) asparagine; by host" evidence="2">
    <location>
        <position position="191"/>
    </location>
</feature>
<feature type="glycosylation site" description="N-linked (GlcNAc...) asparagine; by host" evidence="2">
    <location>
        <position position="366"/>
    </location>
</feature>
<feature type="glycosylation site" description="N-linked (GlcNAc...) asparagine; by host" evidence="2">
    <location>
        <position position="447"/>
    </location>
</feature>
<feature type="glycosylation site" description="N-linked (GlcNAc...) asparagine; by host" evidence="2">
    <location>
        <position position="471"/>
    </location>
</feature>
<feature type="disulfide bond" description="Interchain (between F2 and F1 chains)" evidence="1">
    <location>
        <begin position="76"/>
        <end position="199"/>
    </location>
</feature>
<feature type="disulfide bond" evidence="1">
    <location>
        <begin position="362"/>
        <end position="370"/>
    </location>
</feature>
<feature type="disulfide bond" evidence="1">
    <location>
        <begin position="394"/>
        <end position="399"/>
    </location>
</feature>
<feature type="disulfide bond" evidence="1">
    <location>
        <begin position="401"/>
        <end position="424"/>
    </location>
</feature>